<comment type="function">
    <text evidence="1 8">Probable circularly permuted 1,3-beta-glucanase involved in cell wall modification through beta-1,3-glucan network alterations such as increased branching or remodeling (By similarity). Plays a role in engulfment by host macrophages (PubMed:26087349).</text>
</comment>
<comment type="catalytic activity">
    <reaction evidence="1">
        <text>Hydrolysis of (1-&gt;3)-beta-D-glucosidic linkages in (1-&gt;3)-beta-D-glucans.</text>
        <dbReference type="EC" id="3.2.1.39"/>
    </reaction>
</comment>
<comment type="subcellular location">
    <subcellularLocation>
        <location evidence="9 11">Secreted</location>
    </subcellularLocation>
</comment>
<comment type="induction">
    <text evidence="4 5 7">Expression is up-regulated in the presence of fluconazole (PubMed:15820985). Expression is induced by alpha pheromone in SpiderM medium and regulated by CAP2/HAP43 (PubMed:16987174, PubMed:21592964).</text>
</comment>
<comment type="domain">
    <text evidence="1">The conserved ExDxxE motif might be important for catalytic activity.</text>
</comment>
<comment type="PTM">
    <text evidence="6">Cleaved by KEX2 in vitro.</text>
</comment>
<comment type="disruption phenotype">
    <text evidence="8">Leads to a slight sensitivity to the cell wall damaging agent calcofluor white but not Congo red (PubMed:26087349). Increases the phagocytosis rate by host macrophages (PubMed:26087349).</text>
</comment>
<comment type="similarity">
    <text evidence="12">Belongs to the PGA52 family.</text>
</comment>
<sequence length="467" mass="49230">MKFSSTTLLAGLSSLTATVSAGCSFEGGNYYCSETKKVIYKGIGFSGTYMDVTNMDESTGKCTQQSYSFSGNLSPLDEELSVHFRGPLTLLQFGVYYPSSSGNSKRQIDDQDCNVKHVHHKHKRATEVVQVTQTVFVDGNGNTVTSQALQTSTVESSPAVSSAAADDNANSGSGSGSSAGSGSGYGSVSALDGEGKAYRSDISTKSAPTSTSAQPSSSETASVDGAWTRDSYYTPGSTDNCVFLNYHGGSGSGVWSAKFGNSLSYANADNSGGSSTPVPLEETTIKSGEEYIIFSGSKCGSSSDCGYYRKGTVAYHGFKGASKIFVFEFEMPSDTNGNGYNQDMPAVWLLNAKIPRTLQYGEATCSCWKTGCGELDLFEVLSSGSNKMISHLHDGQGSSQNSNNGGGGSQDYFERPTSGTFKGVVIFEGDEIHILQVDDETEFGSSLDEETVNAWLKEAGSVATIGY</sequence>
<accession>A0A1D8PJA8</accession>
<protein>
    <recommendedName>
        <fullName evidence="1">Probable circularly permuted 1,3-beta-glucanase TOS1</fullName>
        <ecNumber evidence="1">3.2.1.39</ecNumber>
    </recommendedName>
    <alternativeName>
        <fullName evidence="10">Secreted protein TOS1</fullName>
    </alternativeName>
</protein>
<proteinExistence type="evidence at protein level"/>
<evidence type="ECO:0000250" key="1">
    <source>
        <dbReference type="UniProtKB" id="P38288"/>
    </source>
</evidence>
<evidence type="ECO:0000255" key="2"/>
<evidence type="ECO:0000256" key="3">
    <source>
        <dbReference type="SAM" id="MobiDB-lite"/>
    </source>
</evidence>
<evidence type="ECO:0000269" key="4">
    <source>
    </source>
</evidence>
<evidence type="ECO:0000269" key="5">
    <source>
    </source>
</evidence>
<evidence type="ECO:0000269" key="6">
    <source>
    </source>
</evidence>
<evidence type="ECO:0000269" key="7">
    <source>
    </source>
</evidence>
<evidence type="ECO:0000269" key="8">
    <source>
    </source>
</evidence>
<evidence type="ECO:0000269" key="9">
    <source>
    </source>
</evidence>
<evidence type="ECO:0000303" key="10">
    <source>
    </source>
</evidence>
<evidence type="ECO:0000303" key="11">
    <source>
    </source>
</evidence>
<evidence type="ECO:0000305" key="12"/>
<feature type="signal peptide" evidence="2">
    <location>
        <begin position="1"/>
        <end position="21"/>
    </location>
</feature>
<feature type="chain" id="PRO_5009111193" description="Probable circularly permuted 1,3-beta-glucanase TOS1">
    <location>
        <begin position="22"/>
        <end position="467"/>
    </location>
</feature>
<feature type="region of interest" description="Disordered" evidence="3">
    <location>
        <begin position="158"/>
        <end position="187"/>
    </location>
</feature>
<feature type="region of interest" description="Disordered" evidence="3">
    <location>
        <begin position="200"/>
        <end position="223"/>
    </location>
</feature>
<feature type="region of interest" description="Disordered" evidence="3">
    <location>
        <begin position="391"/>
        <end position="413"/>
    </location>
</feature>
<feature type="short sequence motif" description="ExDxxE motif" evidence="1">
    <location>
        <begin position="374"/>
        <end position="379"/>
    </location>
</feature>
<feature type="compositionally biased region" description="Low complexity" evidence="3">
    <location>
        <begin position="158"/>
        <end position="172"/>
    </location>
</feature>
<feature type="compositionally biased region" description="Gly residues" evidence="3">
    <location>
        <begin position="173"/>
        <end position="185"/>
    </location>
</feature>
<feature type="compositionally biased region" description="Low complexity" evidence="3">
    <location>
        <begin position="203"/>
        <end position="222"/>
    </location>
</feature>
<reference key="1">
    <citation type="journal article" date="2004" name="Proc. Natl. Acad. Sci. U.S.A.">
        <title>The diploid genome sequence of Candida albicans.</title>
        <authorList>
            <person name="Jones T."/>
            <person name="Federspiel N.A."/>
            <person name="Chibana H."/>
            <person name="Dungan J."/>
            <person name="Kalman S."/>
            <person name="Magee B.B."/>
            <person name="Newport G."/>
            <person name="Thorstenson Y.R."/>
            <person name="Agabian N."/>
            <person name="Magee P.T."/>
            <person name="Davis R.W."/>
            <person name="Scherer S."/>
        </authorList>
    </citation>
    <scope>NUCLEOTIDE SEQUENCE [LARGE SCALE GENOMIC DNA]</scope>
    <source>
        <strain>SC5314 / ATCC MYA-2876</strain>
    </source>
</reference>
<reference key="2">
    <citation type="journal article" date="2007" name="Genome Biol.">
        <title>Assembly of the Candida albicans genome into sixteen supercontigs aligned on the eight chromosomes.</title>
        <authorList>
            <person name="van het Hoog M."/>
            <person name="Rast T.J."/>
            <person name="Martchenko M."/>
            <person name="Grindle S."/>
            <person name="Dignard D."/>
            <person name="Hogues H."/>
            <person name="Cuomo C."/>
            <person name="Berriman M."/>
            <person name="Scherer S."/>
            <person name="Magee B.B."/>
            <person name="Whiteway M."/>
            <person name="Chibana H."/>
            <person name="Nantel A."/>
            <person name="Magee P.T."/>
        </authorList>
    </citation>
    <scope>GENOME REANNOTATION</scope>
    <source>
        <strain>SC5314 / ATCC MYA-2876</strain>
    </source>
</reference>
<reference key="3">
    <citation type="journal article" date="2013" name="Genome Biol.">
        <title>Assembly of a phased diploid Candida albicans genome facilitates allele-specific measurements and provides a simple model for repeat and indel structure.</title>
        <authorList>
            <person name="Muzzey D."/>
            <person name="Schwartz K."/>
            <person name="Weissman J.S."/>
            <person name="Sherlock G."/>
        </authorList>
    </citation>
    <scope>NUCLEOTIDE SEQUENCE [LARGE SCALE GENOMIC DNA]</scope>
    <scope>GENOME REANNOTATION</scope>
    <source>
        <strain>SC5314 / ATCC MYA-2876</strain>
    </source>
</reference>
<reference key="4">
    <citation type="journal article" date="2005" name="J. Antimicrob. Chemother.">
        <title>Exposure of Candida albicans to antifungal agents affects expression of SAP2 and SAP9 secreted proteinase genes.</title>
        <authorList>
            <person name="Copping V.M.S."/>
            <person name="Barelle C.J."/>
            <person name="Hube B."/>
            <person name="Gow N.A.R."/>
            <person name="Brown A.J.P."/>
            <person name="Odds F.C."/>
        </authorList>
    </citation>
    <scope>INDUCTION</scope>
</reference>
<reference key="5">
    <citation type="journal article" date="2006" name="Mol. Microbiol.">
        <title>The role of nutrient regulation and the Gpa2 protein in the mating pheromone response of C. albicans.</title>
        <authorList>
            <person name="Bennett R.J."/>
            <person name="Johnson A.D."/>
        </authorList>
    </citation>
    <scope>INDUCTION</scope>
</reference>
<reference key="6">
    <citation type="journal article" date="2007" name="Eukaryot. Cell">
        <title>Candida albicans Sun41p, a putative glycosidase, is involved in morphogenesis, cell wall biogenesis, and biofilm formation.</title>
        <authorList>
            <person name="Hiller E."/>
            <person name="Heine S."/>
            <person name="Brunner H."/>
            <person name="Rupp S."/>
        </authorList>
    </citation>
    <scope>IDENTIFICATION BY MASS SPECTROMETRY</scope>
    <scope>SUBCELLULAR LOCATION</scope>
</reference>
<reference key="7">
    <citation type="journal article" date="2008" name="BMC Microbiol.">
        <title>Processing of predicted substrates of fungal Kex2 proteinases from Candida albicans, C. glabrata, Saccharomyces cerevisiae and Pichia pastoris.</title>
        <authorList>
            <person name="Bader O."/>
            <person name="Krauke Y."/>
            <person name="Hube B."/>
        </authorList>
    </citation>
    <scope>CLEAVAGE BY KEX2</scope>
</reference>
<reference key="8">
    <citation type="journal article" date="2011" name="J. Biol. Chem.">
        <title>Cap2-HAP complex is a critical transcriptional regulator that has dual but contrasting roles in regulation of iron homeostasis in Candida albicans.</title>
        <authorList>
            <person name="Singh R.P."/>
            <person name="Prasad H.K."/>
            <person name="Sinha I."/>
            <person name="Agarwal N."/>
            <person name="Natarajan K."/>
        </authorList>
    </citation>
    <scope>INDUCTION</scope>
</reference>
<reference key="9">
    <citation type="journal article" date="2015" name="Eukaryot. Cell">
        <title>Adaptations of the Secretome of Candida albicans in Response to Host-Related Environmental Conditions.</title>
        <authorList>
            <person name="Klis F.M."/>
            <person name="Brul S."/>
        </authorList>
    </citation>
    <scope>SUBCELLULAR LOCATION</scope>
</reference>
<reference key="10">
    <citation type="journal article" date="2015" name="J. Proteomics">
        <title>Candida albicans cell shaving uncovers new proteins involved in cell wall integrity, yeast to hypha transition, stress response and host-pathogen interaction.</title>
        <authorList>
            <person name="Gil-Bona A."/>
            <person name="Parra-Giraldo C.M."/>
            <person name="Hernaez M.L."/>
            <person name="Reales-Calderon J.A."/>
            <person name="Solis N.V."/>
            <person name="Filler S.G."/>
            <person name="Monteoliva L."/>
            <person name="Gil C."/>
        </authorList>
    </citation>
    <scope>FUNCTION</scope>
    <scope>DISRUPTION PHENOTYPE</scope>
</reference>
<dbReference type="EC" id="3.2.1.39" evidence="1"/>
<dbReference type="EMBL" id="CP017625">
    <property type="protein sequence ID" value="AOW28197.1"/>
    <property type="molecule type" value="Genomic_DNA"/>
</dbReference>
<dbReference type="RefSeq" id="XP_721765.2">
    <property type="nucleotide sequence ID" value="XM_716672.2"/>
</dbReference>
<dbReference type="FunCoup" id="A0A1D8PJA8">
    <property type="interactions" value="47"/>
</dbReference>
<dbReference type="STRING" id="237561.A0A1D8PJA8"/>
<dbReference type="EnsemblFungi" id="C3_01550C_A-T">
    <property type="protein sequence ID" value="C3_01550C_A-T-p1"/>
    <property type="gene ID" value="C3_01550C_A"/>
</dbReference>
<dbReference type="GeneID" id="3636566"/>
<dbReference type="KEGG" id="cal:CAALFM_C301550CA"/>
<dbReference type="CGD" id="CAL0000174850">
    <property type="gene designation" value="TOS1"/>
</dbReference>
<dbReference type="VEuPathDB" id="FungiDB:C3_01550C_A"/>
<dbReference type="eggNOG" id="ENOG502QSI7">
    <property type="taxonomic scope" value="Eukaryota"/>
</dbReference>
<dbReference type="InParanoid" id="A0A1D8PJA8"/>
<dbReference type="OrthoDB" id="118256at2759"/>
<dbReference type="Proteomes" id="UP000000559">
    <property type="component" value="Chromosome 3"/>
</dbReference>
<dbReference type="GO" id="GO:0009986">
    <property type="term" value="C:cell surface"/>
    <property type="evidence" value="ECO:0000314"/>
    <property type="project" value="CGD"/>
</dbReference>
<dbReference type="GO" id="GO:0005576">
    <property type="term" value="C:extracellular region"/>
    <property type="evidence" value="ECO:0000314"/>
    <property type="project" value="CGD"/>
</dbReference>
<dbReference type="GO" id="GO:0009277">
    <property type="term" value="C:fungal-type cell wall"/>
    <property type="evidence" value="ECO:0000314"/>
    <property type="project" value="CGD"/>
</dbReference>
<dbReference type="GO" id="GO:0030446">
    <property type="term" value="C:hyphal cell wall"/>
    <property type="evidence" value="ECO:0000314"/>
    <property type="project" value="CGD"/>
</dbReference>
<dbReference type="GO" id="GO:0016798">
    <property type="term" value="F:hydrolase activity, acting on glycosyl bonds"/>
    <property type="evidence" value="ECO:0007669"/>
    <property type="project" value="UniProtKB-KW"/>
</dbReference>
<dbReference type="GO" id="GO:0071555">
    <property type="term" value="P:cell wall organization"/>
    <property type="evidence" value="ECO:0007669"/>
    <property type="project" value="UniProtKB-KW"/>
</dbReference>
<dbReference type="Gene3D" id="2.60.120.200">
    <property type="match status" value="1"/>
</dbReference>
<dbReference type="InterPro" id="IPR018805">
    <property type="entry name" value="YJL171C/Tos1_C"/>
</dbReference>
<dbReference type="InterPro" id="IPR018807">
    <property type="entry name" value="YJL171C/Tos1_N"/>
</dbReference>
<dbReference type="PANTHER" id="PTHR31737">
    <property type="entry name" value="PROTEIN TOS1"/>
    <property type="match status" value="1"/>
</dbReference>
<dbReference type="PANTHER" id="PTHR31737:SF2">
    <property type="entry name" value="PROTEIN TOS1"/>
    <property type="match status" value="1"/>
</dbReference>
<dbReference type="Pfam" id="PF10287">
    <property type="entry name" value="YJL171C_Tos1_C"/>
    <property type="match status" value="1"/>
</dbReference>
<dbReference type="Pfam" id="PF10290">
    <property type="entry name" value="YJL171C_Tos1_N"/>
    <property type="match status" value="1"/>
</dbReference>
<dbReference type="PROSITE" id="PS51257">
    <property type="entry name" value="PROKAR_LIPOPROTEIN"/>
    <property type="match status" value="1"/>
</dbReference>
<gene>
    <name evidence="10" type="primary">TOS1</name>
    <name type="ordered locus">CAALFM_C301550CA</name>
    <name type="ordered locus">orf19.9258</name>
</gene>
<organism>
    <name type="scientific">Candida albicans (strain SC5314 / ATCC MYA-2876)</name>
    <name type="common">Yeast</name>
    <dbReference type="NCBI Taxonomy" id="237561"/>
    <lineage>
        <taxon>Eukaryota</taxon>
        <taxon>Fungi</taxon>
        <taxon>Dikarya</taxon>
        <taxon>Ascomycota</taxon>
        <taxon>Saccharomycotina</taxon>
        <taxon>Pichiomycetes</taxon>
        <taxon>Debaryomycetaceae</taxon>
        <taxon>Candida/Lodderomyces clade</taxon>
        <taxon>Candida</taxon>
    </lineage>
</organism>
<name>TOS1_CANAL</name>
<keyword id="KW-0961">Cell wall biogenesis/degradation</keyword>
<keyword id="KW-0326">Glycosidase</keyword>
<keyword id="KW-0378">Hydrolase</keyword>
<keyword id="KW-1185">Reference proteome</keyword>
<keyword id="KW-0964">Secreted</keyword>
<keyword id="KW-0732">Signal</keyword>
<keyword id="KW-0843">Virulence</keyword>